<organism>
    <name type="scientific">Rattus norvegicus</name>
    <name type="common">Rat</name>
    <dbReference type="NCBI Taxonomy" id="10116"/>
    <lineage>
        <taxon>Eukaryota</taxon>
        <taxon>Metazoa</taxon>
        <taxon>Chordata</taxon>
        <taxon>Craniata</taxon>
        <taxon>Vertebrata</taxon>
        <taxon>Euteleostomi</taxon>
        <taxon>Mammalia</taxon>
        <taxon>Eutheria</taxon>
        <taxon>Euarchontoglires</taxon>
        <taxon>Glires</taxon>
        <taxon>Rodentia</taxon>
        <taxon>Myomorpha</taxon>
        <taxon>Muroidea</taxon>
        <taxon>Muridae</taxon>
        <taxon>Murinae</taxon>
        <taxon>Rattus</taxon>
    </lineage>
</organism>
<comment type="function">
    <text>Involved in the mineralization and structural organization of enamel.</text>
</comment>
<comment type="subcellular location">
    <subcellularLocation>
        <location>Secreted</location>
        <location>Extracellular space</location>
        <location>Extracellular matrix</location>
    </subcellularLocation>
</comment>
<comment type="alternative products">
    <event type="alternative splicing"/>
    <isoform>
        <id>Q62840-1</id>
        <name>1</name>
        <sequence type="displayed"/>
    </isoform>
    <isoform>
        <id>Q62840-2</id>
        <name>2</name>
        <sequence type="described" ref="VSP_000226"/>
    </isoform>
</comment>
<comment type="tissue specificity">
    <text>Ameloblast-specific.</text>
</comment>
<comment type="similarity">
    <text evidence="6">Belongs to the ameloblastin family.</text>
</comment>
<feature type="signal peptide" evidence="3">
    <location>
        <begin position="1"/>
        <end position="26"/>
    </location>
</feature>
<feature type="chain" id="PRO_0000001195" description="Ameloblastin">
    <location>
        <begin position="27"/>
        <end position="422"/>
    </location>
</feature>
<feature type="region of interest" description="Disordered" evidence="4">
    <location>
        <begin position="271"/>
        <end position="321"/>
    </location>
</feature>
<feature type="modified residue" description="Hydroxyproline" evidence="1">
    <location>
        <position position="42"/>
    </location>
</feature>
<feature type="modified residue" description="Phosphoserine" evidence="2">
    <location>
        <position position="48"/>
    </location>
</feature>
<feature type="glycosylation site" description="O-linked (GalNAc...) serine" evidence="1">
    <location>
        <position position="117"/>
    </location>
</feature>
<feature type="splice variant" id="VSP_000226" description="In isoform 2." evidence="5">
    <location>
        <begin position="104"/>
        <end position="118"/>
    </location>
</feature>
<feature type="sequence conflict" description="In Ref. 2; CAA90414." evidence="6" ref="2">
    <original>M</original>
    <variation>I</variation>
    <location>
        <position position="324"/>
    </location>
</feature>
<sequence>MSASKIPLFKMKGLLLFLSLVKMSLAVPAFPQQPGAQGMAPPGMASLSLETMRQLGSLQGLNALSQYSRLGFGKALNSLWLHGLLPPHNSFPWIGPREHETQQYEYSLPVHPPPLPSQPSLQPHQPGLKPFLQPTAATGVQVTPQKPGPHPPMHPGQLPLQEGELIAPDEPQVAPSENPPTPEVPIMDFADPQFPTVFQIAHSLSRGPMAHNKVPTFYPGMFYMSYGANQLNAPARIGFMSSEEMPGERGSPMAYGTLFPGYGGFRQTLRGLNQNSPKGGDFTVEVDSPVSVTKGPEKGEGPEGSPLQEASPDKGENPALLSQMAPGAHAGLLAFPNDHIPNMARGPAGQRLLGVTPAAADPLITPELAEVYETYGADVTTPLGDGEATMDITMSPDTQQPPMPGNKVHQPQVHNAWRFQEP</sequence>
<keyword id="KW-0025">Alternative splicing</keyword>
<keyword id="KW-0091">Biomineralization</keyword>
<keyword id="KW-0272">Extracellular matrix</keyword>
<keyword id="KW-0325">Glycoprotein</keyword>
<keyword id="KW-0379">Hydroxylation</keyword>
<keyword id="KW-0597">Phosphoprotein</keyword>
<keyword id="KW-1185">Reference proteome</keyword>
<keyword id="KW-0964">Secreted</keyword>
<keyword id="KW-0732">Signal</keyword>
<name>AMBN_RAT</name>
<gene>
    <name type="primary">Ambn</name>
</gene>
<protein>
    <recommendedName>
        <fullName>Ameloblastin</fullName>
        <shortName>Amelin</shortName>
    </recommendedName>
</protein>
<proteinExistence type="evidence at transcript level"/>
<evidence type="ECO:0000250" key="1"/>
<evidence type="ECO:0000250" key="2">
    <source>
        <dbReference type="UniProtKB" id="Q28989"/>
    </source>
</evidence>
<evidence type="ECO:0000255" key="3"/>
<evidence type="ECO:0000256" key="4">
    <source>
        <dbReference type="SAM" id="MobiDB-lite"/>
    </source>
</evidence>
<evidence type="ECO:0000303" key="5">
    <source>
    </source>
</evidence>
<evidence type="ECO:0000305" key="6"/>
<dbReference type="EMBL" id="U35097">
    <property type="protein sequence ID" value="AAC52428.1"/>
    <property type="molecule type" value="mRNA"/>
</dbReference>
<dbReference type="EMBL" id="Z50083">
    <property type="protein sequence ID" value="CAA90414.1"/>
    <property type="molecule type" value="mRNA"/>
</dbReference>
<dbReference type="EMBL" id="AY159302">
    <property type="protein sequence ID" value="AAN71737.1"/>
    <property type="molecule type" value="Genomic_DNA"/>
</dbReference>
<dbReference type="EMBL" id="AY159295">
    <property type="protein sequence ID" value="AAN71737.1"/>
    <property type="status" value="JOINED"/>
    <property type="molecule type" value="Genomic_DNA"/>
</dbReference>
<dbReference type="EMBL" id="AY159296">
    <property type="protein sequence ID" value="AAN71737.1"/>
    <property type="status" value="JOINED"/>
    <property type="molecule type" value="Genomic_DNA"/>
</dbReference>
<dbReference type="EMBL" id="AY159297">
    <property type="protein sequence ID" value="AAN71737.1"/>
    <property type="status" value="JOINED"/>
    <property type="molecule type" value="Genomic_DNA"/>
</dbReference>
<dbReference type="EMBL" id="AY159298">
    <property type="protein sequence ID" value="AAN71737.1"/>
    <property type="status" value="JOINED"/>
    <property type="molecule type" value="Genomic_DNA"/>
</dbReference>
<dbReference type="EMBL" id="AY159299">
    <property type="protein sequence ID" value="AAN71737.1"/>
    <property type="status" value="JOINED"/>
    <property type="molecule type" value="Genomic_DNA"/>
</dbReference>
<dbReference type="EMBL" id="AY159300">
    <property type="protein sequence ID" value="AAN71737.1"/>
    <property type="status" value="JOINED"/>
    <property type="molecule type" value="Genomic_DNA"/>
</dbReference>
<dbReference type="RefSeq" id="NP_037032.1">
    <molecule id="Q62840-1"/>
    <property type="nucleotide sequence ID" value="NM_012900.2"/>
</dbReference>
<dbReference type="FunCoup" id="Q62840">
    <property type="interactions" value="5"/>
</dbReference>
<dbReference type="IntAct" id="Q62840">
    <property type="interactions" value="8"/>
</dbReference>
<dbReference type="STRING" id="10116.ENSRNOP00000005003"/>
<dbReference type="GlyCosmos" id="Q62840">
    <property type="glycosylation" value="1 site, No reported glycans"/>
</dbReference>
<dbReference type="GlyGen" id="Q62840">
    <property type="glycosylation" value="2 sites"/>
</dbReference>
<dbReference type="PhosphoSitePlus" id="Q62840"/>
<dbReference type="PaxDb" id="10116-ENSRNOP00000005003"/>
<dbReference type="Ensembl" id="ENSRNOT00000105630.1">
    <molecule id="Q62840-2"/>
    <property type="protein sequence ID" value="ENSRNOP00000087626.1"/>
    <property type="gene ID" value="ENSRNOG00000003718.7"/>
</dbReference>
<dbReference type="GeneID" id="25376"/>
<dbReference type="KEGG" id="rno:25376"/>
<dbReference type="UCSC" id="RGD:2101">
    <molecule id="Q62840-1"/>
    <property type="organism name" value="rat"/>
</dbReference>
<dbReference type="AGR" id="RGD:2101"/>
<dbReference type="CTD" id="258"/>
<dbReference type="RGD" id="2101">
    <property type="gene designation" value="Ambn"/>
</dbReference>
<dbReference type="VEuPathDB" id="HostDB:ENSRNOG00000003718"/>
<dbReference type="eggNOG" id="ENOG502QWCP">
    <property type="taxonomic scope" value="Eukaryota"/>
</dbReference>
<dbReference type="GeneTree" id="ENSGT00390000018227"/>
<dbReference type="HOGENOM" id="CLU_051782_0_0_1"/>
<dbReference type="InParanoid" id="Q62840"/>
<dbReference type="OrthoDB" id="67022at9989"/>
<dbReference type="PhylomeDB" id="Q62840"/>
<dbReference type="TreeFam" id="TF337860"/>
<dbReference type="Reactome" id="R-RNO-381426">
    <property type="pathway name" value="Regulation of Insulin-like Growth Factor (IGF) transport and uptake by Insulin-like Growth Factor Binding Proteins (IGFBPs)"/>
</dbReference>
<dbReference type="Reactome" id="R-RNO-8957275">
    <property type="pathway name" value="Post-translational protein phosphorylation"/>
</dbReference>
<dbReference type="PRO" id="PR:Q62840"/>
<dbReference type="Proteomes" id="UP000002494">
    <property type="component" value="Chromosome 14"/>
</dbReference>
<dbReference type="GO" id="GO:0005576">
    <property type="term" value="C:extracellular region"/>
    <property type="evidence" value="ECO:0007669"/>
    <property type="project" value="UniProtKB-KW"/>
</dbReference>
<dbReference type="GO" id="GO:0008083">
    <property type="term" value="F:growth factor activity"/>
    <property type="evidence" value="ECO:0000266"/>
    <property type="project" value="RGD"/>
</dbReference>
<dbReference type="GO" id="GO:0030345">
    <property type="term" value="F:structural constituent of tooth enamel"/>
    <property type="evidence" value="ECO:0000304"/>
    <property type="project" value="RGD"/>
</dbReference>
<dbReference type="GO" id="GO:0031214">
    <property type="term" value="P:biomineral tissue development"/>
    <property type="evidence" value="ECO:0007669"/>
    <property type="project" value="UniProtKB-KW"/>
</dbReference>
<dbReference type="GO" id="GO:0007155">
    <property type="term" value="P:cell adhesion"/>
    <property type="evidence" value="ECO:0000266"/>
    <property type="project" value="RGD"/>
</dbReference>
<dbReference type="GO" id="GO:0042475">
    <property type="term" value="P:odontogenesis of dentin-containing tooth"/>
    <property type="evidence" value="ECO:0007669"/>
    <property type="project" value="InterPro"/>
</dbReference>
<dbReference type="GO" id="GO:0042127">
    <property type="term" value="P:regulation of cell population proliferation"/>
    <property type="evidence" value="ECO:0000266"/>
    <property type="project" value="RGD"/>
</dbReference>
<dbReference type="InterPro" id="IPR007798">
    <property type="entry name" value="Amelin"/>
</dbReference>
<dbReference type="PANTHER" id="PTHR14115">
    <property type="entry name" value="AMELOBLASTIN"/>
    <property type="match status" value="1"/>
</dbReference>
<dbReference type="PANTHER" id="PTHR14115:SF0">
    <property type="entry name" value="AMELOBLASTIN"/>
    <property type="match status" value="1"/>
</dbReference>
<dbReference type="Pfam" id="PF05111">
    <property type="entry name" value="Amelin"/>
    <property type="match status" value="1"/>
</dbReference>
<dbReference type="SMART" id="SM00817">
    <property type="entry name" value="Amelin"/>
    <property type="match status" value="1"/>
</dbReference>
<reference key="1">
    <citation type="journal article" date="1996" name="J. Biol. Chem.">
        <title>Full-length sequence, localization, and chromosomal mapping of ameloblastin. A novel tooth-specific gene.</title>
        <authorList>
            <person name="Krebsbach P.H."/>
            <person name="Lee S.K."/>
            <person name="Matsuki Y."/>
            <person name="Kozak C.A."/>
            <person name="Yamada K.M."/>
            <person name="Yamada Y."/>
        </authorList>
    </citation>
    <scope>NUCLEOTIDE SEQUENCE [MRNA] (ISOFORM 1)</scope>
    <source>
        <tissue>Incisor</tissue>
    </source>
</reference>
<reference key="2">
    <citation type="journal article" date="1996" name="J. Bone Miner. Res.">
        <title>A novel gene expressed in rat ameloblasts codes for proteins with cell binding domains.</title>
        <authorList>
            <person name="Cerny R."/>
            <person name="Slaby I."/>
            <person name="Hammarstrom L."/>
            <person name="Wurtz T."/>
        </authorList>
    </citation>
    <scope>NUCLEOTIDE SEQUENCE [MRNA] (ISOFORM 2)</scope>
    <source>
        <strain>Sprague-Dawley</strain>
        <tissue>Tooth</tissue>
    </source>
</reference>
<reference key="3">
    <citation type="submission" date="2002-10" db="EMBL/GenBank/DDBJ databases">
        <title>Gene structure of rat ameloblastin and specific expression in amelogenesis.</title>
        <authorList>
            <person name="Lee S.K."/>
            <person name="Kim S.M."/>
            <person name="Lee Y.J."/>
            <person name="Yamada K.M."/>
            <person name="Yamada Y."/>
            <person name="Chi J.G."/>
        </authorList>
    </citation>
    <scope>NUCLEOTIDE SEQUENCE [GENOMIC DNA]</scope>
    <source>
        <strain>Sprague-Dawley</strain>
    </source>
</reference>
<accession>Q62840</accession>
<accession>Q540J9</accession>
<accession>Q63043</accession>